<keyword id="KW-0028">Amino-acid biosynthesis</keyword>
<keyword id="KW-0057">Aromatic amino acid biosynthesis</keyword>
<keyword id="KW-0456">Lyase</keyword>
<keyword id="KW-0663">Pyridoxal phosphate</keyword>
<keyword id="KW-0822">Tryptophan biosynthesis</keyword>
<comment type="function">
    <text evidence="1">The beta subunit is responsible for the synthesis of L-tryptophan from indole and L-serine.</text>
</comment>
<comment type="catalytic activity">
    <reaction evidence="1">
        <text>(1S,2R)-1-C-(indol-3-yl)glycerol 3-phosphate + L-serine = D-glyceraldehyde 3-phosphate + L-tryptophan + H2O</text>
        <dbReference type="Rhea" id="RHEA:10532"/>
        <dbReference type="ChEBI" id="CHEBI:15377"/>
        <dbReference type="ChEBI" id="CHEBI:33384"/>
        <dbReference type="ChEBI" id="CHEBI:57912"/>
        <dbReference type="ChEBI" id="CHEBI:58866"/>
        <dbReference type="ChEBI" id="CHEBI:59776"/>
        <dbReference type="EC" id="4.2.1.20"/>
    </reaction>
</comment>
<comment type="cofactor">
    <cofactor evidence="1">
        <name>pyridoxal 5'-phosphate</name>
        <dbReference type="ChEBI" id="CHEBI:597326"/>
    </cofactor>
</comment>
<comment type="pathway">
    <text evidence="1">Amino-acid biosynthesis; L-tryptophan biosynthesis; L-tryptophan from chorismate: step 5/5.</text>
</comment>
<comment type="subunit">
    <text evidence="1">Tetramer of two alpha and two beta chains.</text>
</comment>
<comment type="similarity">
    <text evidence="1">Belongs to the TrpB family.</text>
</comment>
<name>TRPB_RUTMC</name>
<dbReference type="EC" id="4.2.1.20" evidence="1"/>
<dbReference type="EMBL" id="CP000488">
    <property type="protein sequence ID" value="ABL02736.1"/>
    <property type="molecule type" value="Genomic_DNA"/>
</dbReference>
<dbReference type="RefSeq" id="WP_011738361.1">
    <property type="nucleotide sequence ID" value="NC_008610.1"/>
</dbReference>
<dbReference type="SMR" id="A1AXS9"/>
<dbReference type="STRING" id="413404.Rmag_1031"/>
<dbReference type="KEGG" id="rma:Rmag_1031"/>
<dbReference type="eggNOG" id="COG0133">
    <property type="taxonomic scope" value="Bacteria"/>
</dbReference>
<dbReference type="HOGENOM" id="CLU_016734_3_1_6"/>
<dbReference type="OrthoDB" id="9766131at2"/>
<dbReference type="UniPathway" id="UPA00035">
    <property type="reaction ID" value="UER00044"/>
</dbReference>
<dbReference type="Proteomes" id="UP000002587">
    <property type="component" value="Chromosome"/>
</dbReference>
<dbReference type="GO" id="GO:0005737">
    <property type="term" value="C:cytoplasm"/>
    <property type="evidence" value="ECO:0007669"/>
    <property type="project" value="TreeGrafter"/>
</dbReference>
<dbReference type="GO" id="GO:0004834">
    <property type="term" value="F:tryptophan synthase activity"/>
    <property type="evidence" value="ECO:0007669"/>
    <property type="project" value="UniProtKB-UniRule"/>
</dbReference>
<dbReference type="CDD" id="cd06446">
    <property type="entry name" value="Trp-synth_B"/>
    <property type="match status" value="1"/>
</dbReference>
<dbReference type="FunFam" id="3.40.50.1100:FF:000001">
    <property type="entry name" value="Tryptophan synthase beta chain"/>
    <property type="match status" value="1"/>
</dbReference>
<dbReference type="FunFam" id="3.40.50.1100:FF:000004">
    <property type="entry name" value="Tryptophan synthase beta chain"/>
    <property type="match status" value="1"/>
</dbReference>
<dbReference type="Gene3D" id="3.40.50.1100">
    <property type="match status" value="2"/>
</dbReference>
<dbReference type="HAMAP" id="MF_00133">
    <property type="entry name" value="Trp_synth_beta"/>
    <property type="match status" value="1"/>
</dbReference>
<dbReference type="InterPro" id="IPR006653">
    <property type="entry name" value="Trp_synth_b_CS"/>
</dbReference>
<dbReference type="InterPro" id="IPR006654">
    <property type="entry name" value="Trp_synth_beta"/>
</dbReference>
<dbReference type="InterPro" id="IPR023026">
    <property type="entry name" value="Trp_synth_beta/beta-like"/>
</dbReference>
<dbReference type="InterPro" id="IPR001926">
    <property type="entry name" value="TrpB-like_PALP"/>
</dbReference>
<dbReference type="InterPro" id="IPR036052">
    <property type="entry name" value="TrpB-like_PALP_sf"/>
</dbReference>
<dbReference type="NCBIfam" id="TIGR00263">
    <property type="entry name" value="trpB"/>
    <property type="match status" value="1"/>
</dbReference>
<dbReference type="PANTHER" id="PTHR48077:SF3">
    <property type="entry name" value="TRYPTOPHAN SYNTHASE"/>
    <property type="match status" value="1"/>
</dbReference>
<dbReference type="PANTHER" id="PTHR48077">
    <property type="entry name" value="TRYPTOPHAN SYNTHASE-RELATED"/>
    <property type="match status" value="1"/>
</dbReference>
<dbReference type="Pfam" id="PF00291">
    <property type="entry name" value="PALP"/>
    <property type="match status" value="1"/>
</dbReference>
<dbReference type="PIRSF" id="PIRSF001413">
    <property type="entry name" value="Trp_syn_beta"/>
    <property type="match status" value="1"/>
</dbReference>
<dbReference type="SUPFAM" id="SSF53686">
    <property type="entry name" value="Tryptophan synthase beta subunit-like PLP-dependent enzymes"/>
    <property type="match status" value="1"/>
</dbReference>
<dbReference type="PROSITE" id="PS00168">
    <property type="entry name" value="TRP_SYNTHASE_BETA"/>
    <property type="match status" value="1"/>
</dbReference>
<proteinExistence type="inferred from homology"/>
<organism>
    <name type="scientific">Ruthia magnifica subsp. Calyptogena magnifica</name>
    <dbReference type="NCBI Taxonomy" id="413404"/>
    <lineage>
        <taxon>Bacteria</taxon>
        <taxon>Pseudomonadati</taxon>
        <taxon>Pseudomonadota</taxon>
        <taxon>Gammaproteobacteria</taxon>
        <taxon>Candidatus Pseudothioglobaceae</taxon>
        <taxon>Candidatus Ruthturnera</taxon>
    </lineage>
</organism>
<gene>
    <name evidence="1" type="primary">trpB</name>
    <name type="ordered locus">Rmag_1031</name>
</gene>
<reference key="1">
    <citation type="journal article" date="2007" name="Science">
        <title>The Calyptogena magnifica chemoautotrophic symbiont genome.</title>
        <authorList>
            <person name="Newton I.L.G."/>
            <person name="Woyke T."/>
            <person name="Auchtung T.A."/>
            <person name="Dilly G.F."/>
            <person name="Dutton R.J."/>
            <person name="Fisher M.C."/>
            <person name="Fontanez K.M."/>
            <person name="Lau E."/>
            <person name="Stewart F.J."/>
            <person name="Richardson P.M."/>
            <person name="Barry K.W."/>
            <person name="Saunders E."/>
            <person name="Detter J.C."/>
            <person name="Wu D."/>
            <person name="Eisen J.A."/>
            <person name="Cavanaugh C.M."/>
        </authorList>
    </citation>
    <scope>NUCLEOTIDE SEQUENCE [LARGE SCALE GENOMIC DNA]</scope>
</reference>
<feature type="chain" id="PRO_1000076403" description="Tryptophan synthase beta chain">
    <location>
        <begin position="1"/>
        <end position="401"/>
    </location>
</feature>
<feature type="modified residue" description="N6-(pyridoxal phosphate)lysine" evidence="1">
    <location>
        <position position="92"/>
    </location>
</feature>
<accession>A1AXS9</accession>
<protein>
    <recommendedName>
        <fullName evidence="1">Tryptophan synthase beta chain</fullName>
        <ecNumber evidence="1">4.2.1.20</ecNumber>
    </recommendedName>
</protein>
<evidence type="ECO:0000255" key="1">
    <source>
        <dbReference type="HAMAP-Rule" id="MF_00133"/>
    </source>
</evidence>
<sequence length="401" mass="43455">MSSYNLPDDKGHFEQYGGIFTAETLMIAVTELKDAYAKFKDDEDFIREFEQDLKHYVGRETPLYHAQNLSKKLDGAQIYLKREDLNHTGAHKINNTIGQALLAKRMGKTRIIAETGAGQHGVATATVAARLGLECVVYMGEVDVARQALNVFRMKLLGATVIPVTLGSKTLKDSINEAMRDWVTNIDDTFYIIGTVVGPHPYPMMVRDFQSIIGKETKVQFAAQVGGLPDVLVACVGGGSNAIGLFHAFIDDASVEIYGVEAAGYGLEKGPTAHSAPLCAGSVGVLHGNRTYLMEDENGQIIEGHSISAGLDYPGVGPEHAYLKDSGRARYVAITDKEALEAFHVLTKVEGILPALESSHAVAYGIKLAKELGKDKHIIINLSGRGDKDIHTIAQIEGIEF</sequence>